<feature type="chain" id="PRO_0000282191" description="Uncharacterized protein SE_0114">
    <location>
        <begin position="1"/>
        <end position="257"/>
    </location>
</feature>
<feature type="transmembrane region" description="Helical" evidence="1">
    <location>
        <begin position="7"/>
        <end position="27"/>
    </location>
</feature>
<reference key="1">
    <citation type="journal article" date="2003" name="Mol. Microbiol.">
        <title>Genome-based analysis of virulence genes in a non-biofilm-forming Staphylococcus epidermidis strain (ATCC 12228).</title>
        <authorList>
            <person name="Zhang Y.-Q."/>
            <person name="Ren S.-X."/>
            <person name="Li H.-L."/>
            <person name="Wang Y.-X."/>
            <person name="Fu G."/>
            <person name="Yang J."/>
            <person name="Qin Z.-Q."/>
            <person name="Miao Y.-G."/>
            <person name="Wang W.-Y."/>
            <person name="Chen R.-S."/>
            <person name="Shen Y."/>
            <person name="Chen Z."/>
            <person name="Yuan Z.-H."/>
            <person name="Zhao G.-P."/>
            <person name="Qu D."/>
            <person name="Danchin A."/>
            <person name="Wen Y.-M."/>
        </authorList>
    </citation>
    <scope>NUCLEOTIDE SEQUENCE [LARGE SCALE GENOMIC DNA]</scope>
    <source>
        <strain>ATCC 12228 / FDA PCI 1200</strain>
    </source>
</reference>
<dbReference type="EMBL" id="AE015929">
    <property type="protein sequence ID" value="AAO03711.1"/>
    <property type="status" value="ALT_INIT"/>
    <property type="molecule type" value="Genomic_DNA"/>
</dbReference>
<dbReference type="RefSeq" id="NP_763669.1">
    <property type="nucleotide sequence ID" value="NC_004461.1"/>
</dbReference>
<dbReference type="RefSeq" id="WP_029376395.1">
    <property type="nucleotide sequence ID" value="NZ_WBME01000039.1"/>
</dbReference>
<dbReference type="SMR" id="Q8CU36"/>
<dbReference type="KEGG" id="sep:SE_0114"/>
<dbReference type="PATRIC" id="fig|176280.10.peg.106"/>
<dbReference type="eggNOG" id="ENOG5033UD8">
    <property type="taxonomic scope" value="Bacteria"/>
</dbReference>
<dbReference type="HOGENOM" id="CLU_071589_0_1_9"/>
<dbReference type="OrthoDB" id="2189886at2"/>
<dbReference type="Proteomes" id="UP000001411">
    <property type="component" value="Chromosome"/>
</dbReference>
<dbReference type="GO" id="GO:0005886">
    <property type="term" value="C:plasma membrane"/>
    <property type="evidence" value="ECO:0007669"/>
    <property type="project" value="UniProtKB-SubCell"/>
</dbReference>
<dbReference type="Gene3D" id="2.50.20.40">
    <property type="match status" value="1"/>
</dbReference>
<dbReference type="InterPro" id="IPR007595">
    <property type="entry name" value="Csa"/>
</dbReference>
<dbReference type="InterPro" id="IPR038641">
    <property type="entry name" value="Csa_sf"/>
</dbReference>
<dbReference type="NCBIfam" id="TIGR01742">
    <property type="entry name" value="SA_tandem_lipo"/>
    <property type="match status" value="1"/>
</dbReference>
<dbReference type="Pfam" id="PF04507">
    <property type="entry name" value="DUF576"/>
    <property type="match status" value="1"/>
</dbReference>
<evidence type="ECO:0000255" key="1"/>
<evidence type="ECO:0000305" key="2"/>
<gene>
    <name type="ordered locus">SE_0114</name>
</gene>
<comment type="subcellular location">
    <subcellularLocation>
        <location evidence="2">Cell membrane</location>
        <topology evidence="2">Single-pass membrane protein</topology>
    </subcellularLocation>
</comment>
<comment type="similarity">
    <text evidence="2">Belongs to the staphylococcal tandem lipoprotein family.</text>
</comment>
<comment type="sequence caution" evidence="2">
    <conflict type="erroneous initiation">
        <sequence resource="EMBL-CDS" id="AAO03711"/>
    </conflict>
</comment>
<sequence>MKHSKKLFLCVSFLLITIFIGGGGFMNKDESKETEIKKSFNKTLSMYPIKNLEDLYDKEGYRDEEFNKGDKGMWIVHSEMNIQKKGKALESRGMVLYMDRNTRTTHGYFILTKIKDTGKVKTDDSEKKYPVKLENNKIIPTKQIKDEKLKKEIENFKFFSQYGNFKDLKDYKDGEVSYNPNAPNYSAKYQLSNNDYNVKQIRKRYDIPTEQAPKLLLKGTGDLKGSSTGSKNIEFTFVEKKGENIYFTDSVEYTPSG</sequence>
<organism>
    <name type="scientific">Staphylococcus epidermidis (strain ATCC 12228 / FDA PCI 1200)</name>
    <dbReference type="NCBI Taxonomy" id="176280"/>
    <lineage>
        <taxon>Bacteria</taxon>
        <taxon>Bacillati</taxon>
        <taxon>Bacillota</taxon>
        <taxon>Bacilli</taxon>
        <taxon>Bacillales</taxon>
        <taxon>Staphylococcaceae</taxon>
        <taxon>Staphylococcus</taxon>
    </lineage>
</organism>
<name>Y114_STAES</name>
<keyword id="KW-1003">Cell membrane</keyword>
<keyword id="KW-0472">Membrane</keyword>
<keyword id="KW-0812">Transmembrane</keyword>
<keyword id="KW-1133">Transmembrane helix</keyword>
<accession>Q8CU36</accession>
<proteinExistence type="inferred from homology"/>
<protein>
    <recommendedName>
        <fullName>Uncharacterized protein SE_0114</fullName>
    </recommendedName>
</protein>